<name>SP2AB_BACC2</name>
<reference key="1">
    <citation type="submission" date="2008-10" db="EMBL/GenBank/DDBJ databases">
        <title>Genome sequence of Bacillus cereus G9842.</title>
        <authorList>
            <person name="Dodson R.J."/>
            <person name="Durkin A.S."/>
            <person name="Rosovitz M.J."/>
            <person name="Rasko D.A."/>
            <person name="Hoffmaster A."/>
            <person name="Ravel J."/>
            <person name="Sutton G."/>
        </authorList>
    </citation>
    <scope>NUCLEOTIDE SEQUENCE [LARGE SCALE GENOMIC DNA]</scope>
    <source>
        <strain>G9842</strain>
    </source>
</reference>
<sequence>MRNEMNLQFSALSQNESFARVTVAAFIAQLDPTMEELTEIKTVVSEAVTNAIIHGYEGNAEGIVYISVILEEAMVKLTIRDEGIGIFNLDEARQPLFTTKPELERSGMGFTIMENFMDEVEVISNESFGTTIHLTKYLSNSNALCN</sequence>
<evidence type="ECO:0000255" key="1">
    <source>
        <dbReference type="HAMAP-Rule" id="MF_00637"/>
    </source>
</evidence>
<protein>
    <recommendedName>
        <fullName evidence="1">Anti-sigma F factor</fullName>
        <ecNumber evidence="1">2.7.11.1</ecNumber>
    </recommendedName>
    <alternativeName>
        <fullName evidence="1">Stage II sporulation protein AB</fullName>
    </alternativeName>
</protein>
<feature type="chain" id="PRO_1000130803" description="Anti-sigma F factor">
    <location>
        <begin position="1"/>
        <end position="146"/>
    </location>
</feature>
<dbReference type="EC" id="2.7.11.1" evidence="1"/>
<dbReference type="EMBL" id="CP001186">
    <property type="protein sequence ID" value="ACK94118.1"/>
    <property type="molecule type" value="Genomic_DNA"/>
</dbReference>
<dbReference type="RefSeq" id="WP_001243398.1">
    <property type="nucleotide sequence ID" value="NC_011772.1"/>
</dbReference>
<dbReference type="SMR" id="B7IWI6"/>
<dbReference type="GeneID" id="72450758"/>
<dbReference type="KEGG" id="bcg:BCG9842_B1055"/>
<dbReference type="HOGENOM" id="CLU_090336_11_0_9"/>
<dbReference type="Proteomes" id="UP000006744">
    <property type="component" value="Chromosome"/>
</dbReference>
<dbReference type="GO" id="GO:0005524">
    <property type="term" value="F:ATP binding"/>
    <property type="evidence" value="ECO:0007669"/>
    <property type="project" value="UniProtKB-KW"/>
</dbReference>
<dbReference type="GO" id="GO:0106310">
    <property type="term" value="F:protein serine kinase activity"/>
    <property type="evidence" value="ECO:0007669"/>
    <property type="project" value="RHEA"/>
</dbReference>
<dbReference type="GO" id="GO:0004674">
    <property type="term" value="F:protein serine/threonine kinase activity"/>
    <property type="evidence" value="ECO:0007669"/>
    <property type="project" value="UniProtKB-KW"/>
</dbReference>
<dbReference type="GO" id="GO:0016989">
    <property type="term" value="F:sigma factor antagonist activity"/>
    <property type="evidence" value="ECO:0007669"/>
    <property type="project" value="InterPro"/>
</dbReference>
<dbReference type="GO" id="GO:0030436">
    <property type="term" value="P:asexual sporulation"/>
    <property type="evidence" value="ECO:0007669"/>
    <property type="project" value="UniProtKB-UniRule"/>
</dbReference>
<dbReference type="GO" id="GO:0042174">
    <property type="term" value="P:negative regulation of sporulation resulting in formation of a cellular spore"/>
    <property type="evidence" value="ECO:0007669"/>
    <property type="project" value="InterPro"/>
</dbReference>
<dbReference type="GO" id="GO:0030435">
    <property type="term" value="P:sporulation resulting in formation of a cellular spore"/>
    <property type="evidence" value="ECO:0007669"/>
    <property type="project" value="UniProtKB-KW"/>
</dbReference>
<dbReference type="FunFam" id="3.30.565.10:FF:000022">
    <property type="entry name" value="Anti-sigma F factor"/>
    <property type="match status" value="1"/>
</dbReference>
<dbReference type="Gene3D" id="3.30.565.10">
    <property type="entry name" value="Histidine kinase-like ATPase, C-terminal domain"/>
    <property type="match status" value="1"/>
</dbReference>
<dbReference type="HAMAP" id="MF_00637">
    <property type="entry name" value="Anti_sigma_F"/>
    <property type="match status" value="1"/>
</dbReference>
<dbReference type="InterPro" id="IPR050267">
    <property type="entry name" value="Anti-sigma-factor_SerPK"/>
</dbReference>
<dbReference type="InterPro" id="IPR010194">
    <property type="entry name" value="Anti-sigma_F"/>
</dbReference>
<dbReference type="InterPro" id="IPR036890">
    <property type="entry name" value="HATPase_C_sf"/>
</dbReference>
<dbReference type="NCBIfam" id="TIGR01925">
    <property type="entry name" value="spIIAB"/>
    <property type="match status" value="1"/>
</dbReference>
<dbReference type="PANTHER" id="PTHR35526:SF3">
    <property type="entry name" value="ANTI-SIGMA-F FACTOR RSBW"/>
    <property type="match status" value="1"/>
</dbReference>
<dbReference type="PANTHER" id="PTHR35526">
    <property type="entry name" value="ANTI-SIGMA-F FACTOR RSBW-RELATED"/>
    <property type="match status" value="1"/>
</dbReference>
<dbReference type="Pfam" id="PF13581">
    <property type="entry name" value="HATPase_c_2"/>
    <property type="match status" value="1"/>
</dbReference>
<dbReference type="SMART" id="SM00387">
    <property type="entry name" value="HATPase_c"/>
    <property type="match status" value="1"/>
</dbReference>
<dbReference type="SUPFAM" id="SSF55874">
    <property type="entry name" value="ATPase domain of HSP90 chaperone/DNA topoisomerase II/histidine kinase"/>
    <property type="match status" value="1"/>
</dbReference>
<accession>B7IWI6</accession>
<organism>
    <name type="scientific">Bacillus cereus (strain G9842)</name>
    <dbReference type="NCBI Taxonomy" id="405531"/>
    <lineage>
        <taxon>Bacteria</taxon>
        <taxon>Bacillati</taxon>
        <taxon>Bacillota</taxon>
        <taxon>Bacilli</taxon>
        <taxon>Bacillales</taxon>
        <taxon>Bacillaceae</taxon>
        <taxon>Bacillus</taxon>
        <taxon>Bacillus cereus group</taxon>
    </lineage>
</organism>
<proteinExistence type="inferred from homology"/>
<gene>
    <name evidence="1" type="primary">spoIIAB</name>
    <name type="ordered locus">BCG9842_B1055</name>
</gene>
<keyword id="KW-0067">ATP-binding</keyword>
<keyword id="KW-0418">Kinase</keyword>
<keyword id="KW-0547">Nucleotide-binding</keyword>
<keyword id="KW-0723">Serine/threonine-protein kinase</keyword>
<keyword id="KW-0749">Sporulation</keyword>
<keyword id="KW-0808">Transferase</keyword>
<comment type="function">
    <text evidence="1">Binds to sigma F and blocks its ability to form an RNA polymerase holoenzyme (E-sigma F). Phosphorylates SpoIIAA on a serine residue. This phosphorylation may enable SpoIIAA to act as an anti-anti-sigma factor that counteracts SpoIIAB and thus releases sigma F from inhibition.</text>
</comment>
<comment type="catalytic activity">
    <reaction evidence="1">
        <text>L-seryl-[protein] + ATP = O-phospho-L-seryl-[protein] + ADP + H(+)</text>
        <dbReference type="Rhea" id="RHEA:17989"/>
        <dbReference type="Rhea" id="RHEA-COMP:9863"/>
        <dbReference type="Rhea" id="RHEA-COMP:11604"/>
        <dbReference type="ChEBI" id="CHEBI:15378"/>
        <dbReference type="ChEBI" id="CHEBI:29999"/>
        <dbReference type="ChEBI" id="CHEBI:30616"/>
        <dbReference type="ChEBI" id="CHEBI:83421"/>
        <dbReference type="ChEBI" id="CHEBI:456216"/>
        <dbReference type="EC" id="2.7.11.1"/>
    </reaction>
</comment>
<comment type="catalytic activity">
    <reaction evidence="1">
        <text>L-threonyl-[protein] + ATP = O-phospho-L-threonyl-[protein] + ADP + H(+)</text>
        <dbReference type="Rhea" id="RHEA:46608"/>
        <dbReference type="Rhea" id="RHEA-COMP:11060"/>
        <dbReference type="Rhea" id="RHEA-COMP:11605"/>
        <dbReference type="ChEBI" id="CHEBI:15378"/>
        <dbReference type="ChEBI" id="CHEBI:30013"/>
        <dbReference type="ChEBI" id="CHEBI:30616"/>
        <dbReference type="ChEBI" id="CHEBI:61977"/>
        <dbReference type="ChEBI" id="CHEBI:456216"/>
        <dbReference type="EC" id="2.7.11.1"/>
    </reaction>
</comment>
<comment type="similarity">
    <text evidence="1">Belongs to the anti-sigma-factor family.</text>
</comment>